<protein>
    <recommendedName>
        <fullName evidence="1">Dihydroorotase</fullName>
        <shortName evidence="1">DHOase</shortName>
        <ecNumber evidence="1">3.5.2.3</ecNumber>
    </recommendedName>
</protein>
<accession>Q48F12</accession>
<gene>
    <name evidence="1" type="primary">pyrC</name>
    <name type="ordered locus">PSPPH_3888</name>
</gene>
<evidence type="ECO:0000255" key="1">
    <source>
        <dbReference type="HAMAP-Rule" id="MF_00219"/>
    </source>
</evidence>
<dbReference type="EC" id="3.5.2.3" evidence="1"/>
<dbReference type="EMBL" id="CP000058">
    <property type="protein sequence ID" value="AAZ33776.1"/>
    <property type="molecule type" value="Genomic_DNA"/>
</dbReference>
<dbReference type="RefSeq" id="WP_002554848.1">
    <property type="nucleotide sequence ID" value="NC_005773.3"/>
</dbReference>
<dbReference type="SMR" id="Q48F12"/>
<dbReference type="MEROPS" id="M38.A02"/>
<dbReference type="GeneID" id="61871439"/>
<dbReference type="KEGG" id="psp:PSPPH_3888"/>
<dbReference type="eggNOG" id="COG0418">
    <property type="taxonomic scope" value="Bacteria"/>
</dbReference>
<dbReference type="HOGENOM" id="CLU_041558_1_0_6"/>
<dbReference type="UniPathway" id="UPA00070">
    <property type="reaction ID" value="UER00117"/>
</dbReference>
<dbReference type="Proteomes" id="UP000000551">
    <property type="component" value="Chromosome"/>
</dbReference>
<dbReference type="GO" id="GO:0005829">
    <property type="term" value="C:cytosol"/>
    <property type="evidence" value="ECO:0007669"/>
    <property type="project" value="TreeGrafter"/>
</dbReference>
<dbReference type="GO" id="GO:0004151">
    <property type="term" value="F:dihydroorotase activity"/>
    <property type="evidence" value="ECO:0007669"/>
    <property type="project" value="UniProtKB-UniRule"/>
</dbReference>
<dbReference type="GO" id="GO:0008270">
    <property type="term" value="F:zinc ion binding"/>
    <property type="evidence" value="ECO:0007669"/>
    <property type="project" value="UniProtKB-UniRule"/>
</dbReference>
<dbReference type="GO" id="GO:0006207">
    <property type="term" value="P:'de novo' pyrimidine nucleobase biosynthetic process"/>
    <property type="evidence" value="ECO:0007669"/>
    <property type="project" value="TreeGrafter"/>
</dbReference>
<dbReference type="GO" id="GO:0044205">
    <property type="term" value="P:'de novo' UMP biosynthetic process"/>
    <property type="evidence" value="ECO:0007669"/>
    <property type="project" value="UniProtKB-UniRule"/>
</dbReference>
<dbReference type="CDD" id="cd01294">
    <property type="entry name" value="DHOase"/>
    <property type="match status" value="1"/>
</dbReference>
<dbReference type="FunFam" id="3.20.20.140:FF:000006">
    <property type="entry name" value="Dihydroorotase"/>
    <property type="match status" value="1"/>
</dbReference>
<dbReference type="Gene3D" id="3.20.20.140">
    <property type="entry name" value="Metal-dependent hydrolases"/>
    <property type="match status" value="1"/>
</dbReference>
<dbReference type="HAMAP" id="MF_00219">
    <property type="entry name" value="PyrC_classII"/>
    <property type="match status" value="1"/>
</dbReference>
<dbReference type="InterPro" id="IPR006680">
    <property type="entry name" value="Amidohydro-rel"/>
</dbReference>
<dbReference type="InterPro" id="IPR004721">
    <property type="entry name" value="DHOdimr"/>
</dbReference>
<dbReference type="InterPro" id="IPR002195">
    <property type="entry name" value="Dihydroorotase_CS"/>
</dbReference>
<dbReference type="InterPro" id="IPR032466">
    <property type="entry name" value="Metal_Hydrolase"/>
</dbReference>
<dbReference type="NCBIfam" id="TIGR00856">
    <property type="entry name" value="pyrC_dimer"/>
    <property type="match status" value="1"/>
</dbReference>
<dbReference type="PANTHER" id="PTHR43137">
    <property type="entry name" value="DIHYDROOROTASE"/>
    <property type="match status" value="1"/>
</dbReference>
<dbReference type="PANTHER" id="PTHR43137:SF1">
    <property type="entry name" value="DIHYDROOROTASE"/>
    <property type="match status" value="1"/>
</dbReference>
<dbReference type="Pfam" id="PF01979">
    <property type="entry name" value="Amidohydro_1"/>
    <property type="match status" value="1"/>
</dbReference>
<dbReference type="PIRSF" id="PIRSF001237">
    <property type="entry name" value="DHOdimr"/>
    <property type="match status" value="1"/>
</dbReference>
<dbReference type="SUPFAM" id="SSF51556">
    <property type="entry name" value="Metallo-dependent hydrolases"/>
    <property type="match status" value="1"/>
</dbReference>
<dbReference type="PROSITE" id="PS00482">
    <property type="entry name" value="DIHYDROOROTASE_1"/>
    <property type="match status" value="1"/>
</dbReference>
<dbReference type="PROSITE" id="PS00483">
    <property type="entry name" value="DIHYDROOROTASE_2"/>
    <property type="match status" value="1"/>
</dbReference>
<comment type="function">
    <text evidence="1">Catalyzes the reversible cyclization of carbamoyl aspartate to dihydroorotate.</text>
</comment>
<comment type="catalytic activity">
    <reaction evidence="1">
        <text>(S)-dihydroorotate + H2O = N-carbamoyl-L-aspartate + H(+)</text>
        <dbReference type="Rhea" id="RHEA:24296"/>
        <dbReference type="ChEBI" id="CHEBI:15377"/>
        <dbReference type="ChEBI" id="CHEBI:15378"/>
        <dbReference type="ChEBI" id="CHEBI:30864"/>
        <dbReference type="ChEBI" id="CHEBI:32814"/>
        <dbReference type="EC" id="3.5.2.3"/>
    </reaction>
</comment>
<comment type="cofactor">
    <cofactor evidence="1">
        <name>Zn(2+)</name>
        <dbReference type="ChEBI" id="CHEBI:29105"/>
    </cofactor>
    <text evidence="1">Binds 2 Zn(2+) ions per subunit.</text>
</comment>
<comment type="pathway">
    <text evidence="1">Pyrimidine metabolism; UMP biosynthesis via de novo pathway; (S)-dihydroorotate from bicarbonate: step 3/3.</text>
</comment>
<comment type="subunit">
    <text evidence="1">Homodimer.</text>
</comment>
<comment type="similarity">
    <text evidence="1">Belongs to the metallo-dependent hydrolases superfamily. DHOase family. Class II DHOase subfamily.</text>
</comment>
<proteinExistence type="inferred from homology"/>
<keyword id="KW-0378">Hydrolase</keyword>
<keyword id="KW-0479">Metal-binding</keyword>
<keyword id="KW-0665">Pyrimidine biosynthesis</keyword>
<keyword id="KW-0862">Zinc</keyword>
<feature type="chain" id="PRO_1000024030" description="Dihydroorotase">
    <location>
        <begin position="1"/>
        <end position="347"/>
    </location>
</feature>
<feature type="active site" evidence="1">
    <location>
        <position position="248"/>
    </location>
</feature>
<feature type="binding site" evidence="1">
    <location>
        <position position="14"/>
    </location>
    <ligand>
        <name>Zn(2+)</name>
        <dbReference type="ChEBI" id="CHEBI:29105"/>
        <label>1</label>
    </ligand>
</feature>
<feature type="binding site" evidence="1">
    <location>
        <begin position="16"/>
        <end position="18"/>
    </location>
    <ligand>
        <name>substrate</name>
    </ligand>
</feature>
<feature type="binding site" evidence="1">
    <location>
        <position position="16"/>
    </location>
    <ligand>
        <name>Zn(2+)</name>
        <dbReference type="ChEBI" id="CHEBI:29105"/>
        <label>1</label>
    </ligand>
</feature>
<feature type="binding site" evidence="1">
    <location>
        <position position="42"/>
    </location>
    <ligand>
        <name>substrate</name>
    </ligand>
</feature>
<feature type="binding site" description="via carbamate group" evidence="1">
    <location>
        <position position="100"/>
    </location>
    <ligand>
        <name>Zn(2+)</name>
        <dbReference type="ChEBI" id="CHEBI:29105"/>
        <label>1</label>
    </ligand>
</feature>
<feature type="binding site" description="via carbamate group" evidence="1">
    <location>
        <position position="100"/>
    </location>
    <ligand>
        <name>Zn(2+)</name>
        <dbReference type="ChEBI" id="CHEBI:29105"/>
        <label>2</label>
    </ligand>
</feature>
<feature type="binding site" evidence="1">
    <location>
        <position position="137"/>
    </location>
    <ligand>
        <name>substrate</name>
    </ligand>
</feature>
<feature type="binding site" evidence="1">
    <location>
        <position position="137"/>
    </location>
    <ligand>
        <name>Zn(2+)</name>
        <dbReference type="ChEBI" id="CHEBI:29105"/>
        <label>2</label>
    </ligand>
</feature>
<feature type="binding site" evidence="1">
    <location>
        <position position="175"/>
    </location>
    <ligand>
        <name>Zn(2+)</name>
        <dbReference type="ChEBI" id="CHEBI:29105"/>
        <label>2</label>
    </ligand>
</feature>
<feature type="binding site" evidence="1">
    <location>
        <position position="220"/>
    </location>
    <ligand>
        <name>substrate</name>
    </ligand>
</feature>
<feature type="binding site" evidence="1">
    <location>
        <position position="248"/>
    </location>
    <ligand>
        <name>Zn(2+)</name>
        <dbReference type="ChEBI" id="CHEBI:29105"/>
        <label>1</label>
    </ligand>
</feature>
<feature type="binding site" evidence="1">
    <location>
        <position position="252"/>
    </location>
    <ligand>
        <name>substrate</name>
    </ligand>
</feature>
<feature type="binding site" evidence="1">
    <location>
        <position position="264"/>
    </location>
    <ligand>
        <name>substrate</name>
    </ligand>
</feature>
<feature type="modified residue" description="N6-carboxylysine" evidence="1">
    <location>
        <position position="100"/>
    </location>
</feature>
<sequence length="347" mass="38238">MSDRLTLLRPDDWHIHLRDGAVLPHTVADVARTFGRAIIMPNLVPPVRNAQQADAYRQRILAARPAGSRFEPLMVLYLTDQTTPEDIRTAKASGFVHAAKLYPAGATTNSDSGVTSIDKIFPALEAMAEVGMLLLVHGEVTRGEIDVFDREKVFIDEHLRRVVERFPTLKVVFEHITTGEAVQFVNEASANVAATITAHHLLYNRNHMLVGGIRPHFYCLPILKRNTHQASLLDAATSGSGKFFLGTDSAPHAQHAKENACGCAGCYTAYAAIELYAEAFEQRNALDKLEGFASLHGPAFYGLPANQDTITLVRDEWTAPASLPFGELTVIPLRAGEKLRWRLEEHA</sequence>
<reference key="1">
    <citation type="journal article" date="2005" name="J. Bacteriol.">
        <title>Whole-genome sequence analysis of Pseudomonas syringae pv. phaseolicola 1448A reveals divergence among pathovars in genes involved in virulence and transposition.</title>
        <authorList>
            <person name="Joardar V."/>
            <person name="Lindeberg M."/>
            <person name="Jackson R.W."/>
            <person name="Selengut J."/>
            <person name="Dodson R."/>
            <person name="Brinkac L.M."/>
            <person name="Daugherty S.C."/>
            <person name="DeBoy R.T."/>
            <person name="Durkin A.S."/>
            <person name="Gwinn Giglio M."/>
            <person name="Madupu R."/>
            <person name="Nelson W.C."/>
            <person name="Rosovitz M.J."/>
            <person name="Sullivan S.A."/>
            <person name="Crabtree J."/>
            <person name="Creasy T."/>
            <person name="Davidsen T.M."/>
            <person name="Haft D.H."/>
            <person name="Zafar N."/>
            <person name="Zhou L."/>
            <person name="Halpin R."/>
            <person name="Holley T."/>
            <person name="Khouri H.M."/>
            <person name="Feldblyum T.V."/>
            <person name="White O."/>
            <person name="Fraser C.M."/>
            <person name="Chatterjee A.K."/>
            <person name="Cartinhour S."/>
            <person name="Schneider D."/>
            <person name="Mansfield J.W."/>
            <person name="Collmer A."/>
            <person name="Buell R."/>
        </authorList>
    </citation>
    <scope>NUCLEOTIDE SEQUENCE [LARGE SCALE GENOMIC DNA]</scope>
    <source>
        <strain>1448A / Race 6</strain>
    </source>
</reference>
<name>PYRC_PSE14</name>
<organism>
    <name type="scientific">Pseudomonas savastanoi pv. phaseolicola (strain 1448A / Race 6)</name>
    <name type="common">Pseudomonas syringae pv. phaseolicola (strain 1448A / Race 6)</name>
    <dbReference type="NCBI Taxonomy" id="264730"/>
    <lineage>
        <taxon>Bacteria</taxon>
        <taxon>Pseudomonadati</taxon>
        <taxon>Pseudomonadota</taxon>
        <taxon>Gammaproteobacteria</taxon>
        <taxon>Pseudomonadales</taxon>
        <taxon>Pseudomonadaceae</taxon>
        <taxon>Pseudomonas</taxon>
    </lineage>
</organism>